<reference key="1">
    <citation type="journal article" date="1997" name="Nature">
        <title>The complete genome sequence of the Gram-positive bacterium Bacillus subtilis.</title>
        <authorList>
            <person name="Kunst F."/>
            <person name="Ogasawara N."/>
            <person name="Moszer I."/>
            <person name="Albertini A.M."/>
            <person name="Alloni G."/>
            <person name="Azevedo V."/>
            <person name="Bertero M.G."/>
            <person name="Bessieres P."/>
            <person name="Bolotin A."/>
            <person name="Borchert S."/>
            <person name="Borriss R."/>
            <person name="Boursier L."/>
            <person name="Brans A."/>
            <person name="Braun M."/>
            <person name="Brignell S.C."/>
            <person name="Bron S."/>
            <person name="Brouillet S."/>
            <person name="Bruschi C.V."/>
            <person name="Caldwell B."/>
            <person name="Capuano V."/>
            <person name="Carter N.M."/>
            <person name="Choi S.-K."/>
            <person name="Codani J.-J."/>
            <person name="Connerton I.F."/>
            <person name="Cummings N.J."/>
            <person name="Daniel R.A."/>
            <person name="Denizot F."/>
            <person name="Devine K.M."/>
            <person name="Duesterhoeft A."/>
            <person name="Ehrlich S.D."/>
            <person name="Emmerson P.T."/>
            <person name="Entian K.-D."/>
            <person name="Errington J."/>
            <person name="Fabret C."/>
            <person name="Ferrari E."/>
            <person name="Foulger D."/>
            <person name="Fritz C."/>
            <person name="Fujita M."/>
            <person name="Fujita Y."/>
            <person name="Fuma S."/>
            <person name="Galizzi A."/>
            <person name="Galleron N."/>
            <person name="Ghim S.-Y."/>
            <person name="Glaser P."/>
            <person name="Goffeau A."/>
            <person name="Golightly E.J."/>
            <person name="Grandi G."/>
            <person name="Guiseppi G."/>
            <person name="Guy B.J."/>
            <person name="Haga K."/>
            <person name="Haiech J."/>
            <person name="Harwood C.R."/>
            <person name="Henaut A."/>
            <person name="Hilbert H."/>
            <person name="Holsappel S."/>
            <person name="Hosono S."/>
            <person name="Hullo M.-F."/>
            <person name="Itaya M."/>
            <person name="Jones L.-M."/>
            <person name="Joris B."/>
            <person name="Karamata D."/>
            <person name="Kasahara Y."/>
            <person name="Klaerr-Blanchard M."/>
            <person name="Klein C."/>
            <person name="Kobayashi Y."/>
            <person name="Koetter P."/>
            <person name="Koningstein G."/>
            <person name="Krogh S."/>
            <person name="Kumano M."/>
            <person name="Kurita K."/>
            <person name="Lapidus A."/>
            <person name="Lardinois S."/>
            <person name="Lauber J."/>
            <person name="Lazarevic V."/>
            <person name="Lee S.-M."/>
            <person name="Levine A."/>
            <person name="Liu H."/>
            <person name="Masuda S."/>
            <person name="Mauel C."/>
            <person name="Medigue C."/>
            <person name="Medina N."/>
            <person name="Mellado R.P."/>
            <person name="Mizuno M."/>
            <person name="Moestl D."/>
            <person name="Nakai S."/>
            <person name="Noback M."/>
            <person name="Noone D."/>
            <person name="O'Reilly M."/>
            <person name="Ogawa K."/>
            <person name="Ogiwara A."/>
            <person name="Oudega B."/>
            <person name="Park S.-H."/>
            <person name="Parro V."/>
            <person name="Pohl T.M."/>
            <person name="Portetelle D."/>
            <person name="Porwollik S."/>
            <person name="Prescott A.M."/>
            <person name="Presecan E."/>
            <person name="Pujic P."/>
            <person name="Purnelle B."/>
            <person name="Rapoport G."/>
            <person name="Rey M."/>
            <person name="Reynolds S."/>
            <person name="Rieger M."/>
            <person name="Rivolta C."/>
            <person name="Rocha E."/>
            <person name="Roche B."/>
            <person name="Rose M."/>
            <person name="Sadaie Y."/>
            <person name="Sato T."/>
            <person name="Scanlan E."/>
            <person name="Schleich S."/>
            <person name="Schroeter R."/>
            <person name="Scoffone F."/>
            <person name="Sekiguchi J."/>
            <person name="Sekowska A."/>
            <person name="Seror S.J."/>
            <person name="Serror P."/>
            <person name="Shin B.-S."/>
            <person name="Soldo B."/>
            <person name="Sorokin A."/>
            <person name="Tacconi E."/>
            <person name="Takagi T."/>
            <person name="Takahashi H."/>
            <person name="Takemaru K."/>
            <person name="Takeuchi M."/>
            <person name="Tamakoshi A."/>
            <person name="Tanaka T."/>
            <person name="Terpstra P."/>
            <person name="Tognoni A."/>
            <person name="Tosato V."/>
            <person name="Uchiyama S."/>
            <person name="Vandenbol M."/>
            <person name="Vannier F."/>
            <person name="Vassarotti A."/>
            <person name="Viari A."/>
            <person name="Wambutt R."/>
            <person name="Wedler E."/>
            <person name="Wedler H."/>
            <person name="Weitzenegger T."/>
            <person name="Winters P."/>
            <person name="Wipat A."/>
            <person name="Yamamoto H."/>
            <person name="Yamane K."/>
            <person name="Yasumoto K."/>
            <person name="Yata K."/>
            <person name="Yoshida K."/>
            <person name="Yoshikawa H.-F."/>
            <person name="Zumstein E."/>
            <person name="Yoshikawa H."/>
            <person name="Danchin A."/>
        </authorList>
    </citation>
    <scope>NUCLEOTIDE SEQUENCE [LARGE SCALE GENOMIC DNA]</scope>
    <source>
        <strain>168</strain>
    </source>
</reference>
<reference key="2">
    <citation type="journal article" date="2001" name="J. Bacteriol.">
        <title>Global analysis of the general stress response of Bacillus subtilis.</title>
        <authorList>
            <person name="Petersohn A."/>
            <person name="Brigulla M."/>
            <person name="Haas S."/>
            <person name="Hoheisel J.D."/>
            <person name="Voelker U."/>
            <person name="Hecker M."/>
        </authorList>
    </citation>
    <scope>INDUCTION</scope>
</reference>
<reference key="3">
    <citation type="journal article" date="2001" name="Mol. Microbiol.">
        <title>Loss-of-function mutations in yjbD result in ClpX- and ClpP-independent competence development of Bacillus subtilis.</title>
        <authorList>
            <person name="Nakano M.M."/>
            <person name="Hajarizadeh F."/>
            <person name="Zhu Y."/>
            <person name="Zuber P."/>
        </authorList>
    </citation>
    <scope>FUNCTION IN REGULATION OF COMPETENCE</scope>
    <scope>DISRUPTION PHENOTYPE</scope>
    <source>
        <strain>168 / JH642</strain>
    </source>
</reference>
<reference key="4">
    <citation type="journal article" date="2002" name="Mol. Microbiol.">
        <title>Spx (YjbD), a negative effector of competence in Bacillus subtilis, enhances ClpC-MecA-ComK interaction.</title>
        <authorList>
            <person name="Nakano M.M."/>
            <person name="Nakano S."/>
            <person name="Zuber P."/>
        </authorList>
    </citation>
    <scope>FUNCTION IN REGULATION OF COMPETENCE</scope>
    <source>
        <strain>168 / JH642</strain>
    </source>
</reference>
<reference key="5">
    <citation type="journal article" date="2002" name="J. Bacteriol.">
        <title>Multiple pathways of Spx (YjbD) proteolysis in Bacillus subtilis.</title>
        <authorList>
            <person name="Nakano S."/>
            <person name="Zheng G."/>
            <person name="Nakano M.M."/>
            <person name="Zuber P."/>
        </authorList>
    </citation>
    <scope>ACTIVITY REGULATION</scope>
    <scope>DEGRADATION BY CLPXP AND CLPCP</scope>
    <source>
        <strain>168 / JH642</strain>
    </source>
</reference>
<reference key="6">
    <citation type="journal article" date="2003" name="Proc. Natl. Acad. Sci. U.S.A.">
        <title>A regulatory protein that interferes with activator-stimulated transcription in bacteria.</title>
        <authorList>
            <person name="Nakano S."/>
            <person name="Nakano M.M."/>
            <person name="Zhang Y."/>
            <person name="Leelakriangsak M."/>
            <person name="Zuber P."/>
        </authorList>
    </citation>
    <scope>FUNCTION</scope>
    <scope>ACTIVITY REGULATION</scope>
    <scope>INTERACTION WITH RNAP</scope>
    <source>
        <strain>168 / JH642</strain>
    </source>
</reference>
<reference key="7">
    <citation type="journal article" date="2003" name="Proc. Natl. Acad. Sci. U.S.A.">
        <title>Spx-dependent global transcriptional control is induced by thiol-specific oxidative stress in Bacillus subtilis.</title>
        <authorList>
            <person name="Nakano S."/>
            <person name="Kuester-Schoeck E."/>
            <person name="Grossman A.D."/>
            <person name="Zuber P."/>
        </authorList>
    </citation>
    <scope>FUNCTION IN DISULFIDE STRESS</scope>
    <scope>INDUCTION</scope>
    <scope>DISRUPTION PHENOTYPE</scope>
    <scope>MUTAGENESIS OF 130-ALA-ASN-131</scope>
    <source>
        <strain>168 / JH642</strain>
    </source>
</reference>
<reference key="8">
    <citation type="journal article" date="2005" name="Mol. Microbiol.">
        <title>Redox-sensitive transcriptional control by a thiol/disulphide switch in the global regulator, Spx.</title>
        <authorList>
            <person name="Nakano S."/>
            <person name="Erwin K.N."/>
            <person name="Ralle M."/>
            <person name="Zuber P."/>
        </authorList>
    </citation>
    <scope>FUNCTION IN DISULFIDE STRESS</scope>
    <scope>ACTIVITY REGULATION</scope>
    <scope>DISULFIDE BOND</scope>
    <scope>MUTAGENESIS OF CYS-10 AND CYS-13</scope>
</reference>
<reference key="9">
    <citation type="journal article" date="2006" name="J. Bacteriol.">
        <title>The global regulator Spx functions in the control of organosulfur metabolism in Bacillus subtilis.</title>
        <authorList>
            <person name="Choi S.Y."/>
            <person name="Reyes D."/>
            <person name="Leelakriangsak M."/>
            <person name="Zuber P."/>
        </authorList>
    </citation>
    <scope>FUNCTION IN ORGANOSULFUR METABOLISM</scope>
</reference>
<reference key="10">
    <citation type="journal article" date="2007" name="J. Bacteriol.">
        <title>Dual negative control of spx transcription initiation from the P3 promoter by repressors PerR and YodB in Bacillus subtilis.</title>
        <authorList>
            <person name="Leelakriangsak M."/>
            <person name="Kobayashi K."/>
            <person name="Zuber P."/>
        </authorList>
    </citation>
    <scope>INDUCTION</scope>
    <source>
        <strain>168 / JH642</strain>
    </source>
</reference>
<reference key="11">
    <citation type="journal article" date="2007" name="J. Bacteriol.">
        <title>SigM-responsive genes of Bacillus subtilis and their promoters.</title>
        <authorList>
            <person name="Jervis A.J."/>
            <person name="Thackray P.D."/>
            <person name="Houston C.W."/>
            <person name="Horsburgh M.J."/>
            <person name="Moir A."/>
        </authorList>
    </citation>
    <scope>INDUCTION</scope>
    <source>
        <strain>168 / 1604</strain>
    </source>
</reference>
<reference key="12">
    <citation type="journal article" date="2007" name="Mol. Microbiol.">
        <title>YjbH is a novel negative effector of the disulphide stress regulator, Spx, in Bacillus subtilis.</title>
        <authorList>
            <person name="Larsson J.T."/>
            <person name="Rogstam A."/>
            <person name="von Wachenfeldt C."/>
        </authorList>
    </citation>
    <scope>ACTIVITY REGULATION</scope>
</reference>
<reference key="13">
    <citation type="journal article" date="2008" name="BMC Microbiol.">
        <title>Spx mediates oxidative stress regulation of the methionine sulfoxide reductases operon in Bacillus subtilis.</title>
        <authorList>
            <person name="You C."/>
            <person name="Sekowska A."/>
            <person name="Francetic O."/>
            <person name="Martin-Verstraete I."/>
            <person name="Wang Y."/>
            <person name="Danchin A."/>
        </authorList>
    </citation>
    <scope>FUNCTION IN OXIDATIVE STRESS</scope>
    <scope>ACTIVITY REGULATION</scope>
    <scope>DISRUPTION PHENOTYPE</scope>
    <source>
        <strain>168</strain>
    </source>
</reference>
<reference key="14">
    <citation type="journal article" date="2008" name="Mol. Microbiol.">
        <title>Activation of transcription initiation by Spx: formation of transcription complex and identification of a Cis-acting element required for transcriptional activation.</title>
        <authorList>
            <person name="Reyes D.Y."/>
            <person name="Zuber P."/>
        </authorList>
    </citation>
    <scope>FUNCTION</scope>
</reference>
<reference key="15">
    <citation type="journal article" date="2009" name="J. Bacteriol.">
        <title>The YjbH protein of Bacillus subtilis enhances ClpXP-catalyzed proteolysis of Spx.</title>
        <authorList>
            <person name="Garg S.K."/>
            <person name="Kommineni S."/>
            <person name="Henslee L."/>
            <person name="Zhang Y."/>
            <person name="Zuber P."/>
        </authorList>
    </citation>
    <scope>ACTIVITY REGULATION</scope>
    <scope>DEGRADATION BY CLPXP</scope>
    <scope>INTERACTION WITH SPXH/YJBH</scope>
    <source>
        <strain>168 / JH642</strain>
    </source>
</reference>
<reference key="16">
    <citation type="journal article" date="2012" name="J. Bacteriol.">
        <title>Evidence that a single monomer of Spx can productively interact with RNA polymerase in Bacillus subtilis.</title>
        <authorList>
            <person name="Lin A.A."/>
            <person name="Zuber P."/>
        </authorList>
    </citation>
    <scope>SUBUNIT</scope>
    <scope>INTERACTION WITH RNAP</scope>
    <source>
        <strain>168 / JH642</strain>
    </source>
</reference>
<reference key="17">
    <citation type="journal article" date="2013" name="Microbiology">
        <title>Regulation of Bacillus subtilis bacillithiol biosynthesis operons by Spx.</title>
        <authorList>
            <person name="Gaballa A."/>
            <person name="Antelmann H."/>
            <person name="Hamilton C.J."/>
            <person name="Helmann J.D."/>
        </authorList>
    </citation>
    <scope>FUNCTION</scope>
    <scope>ACTIVITY REGULATION</scope>
    <source>
        <strain>168 / CU1065</strain>
    </source>
</reference>
<reference key="18">
    <citation type="journal article" date="2014" name="Mol. Microbiol.">
        <title>The role of thiol oxidative stress response in heat-induced protein aggregate formation during thermotolerance in Bacillus subtilis.</title>
        <authorList>
            <person name="Runde S."/>
            <person name="Moliere N."/>
            <person name="Heinz A."/>
            <person name="Maisonneuve E."/>
            <person name="Janczikowski A."/>
            <person name="Elsholz A.K."/>
            <person name="Gerth U."/>
            <person name="Hecker M."/>
            <person name="Turgay K."/>
        </authorList>
    </citation>
    <scope>FUNCTION IN HEAT STRESS RESPONSE</scope>
    <scope>INDUCTION</scope>
    <scope>DISRUPTION PHENOTYPE</scope>
</reference>
<reference key="19">
    <citation type="journal article" date="2014" name="Mol. Microbiol.">
        <title>Adaptor bypass mutations of Bacillus subtilis spx suggest a mechanism for YjbH-enhanced proteolysis of the regulator Spx by ClpXP.</title>
        <authorList>
            <person name="Chan C.M."/>
            <person name="Hahn E."/>
            <person name="Zuber P."/>
        </authorList>
    </citation>
    <scope>INTERACTION WITH SPXH/YJBH</scope>
    <scope>DOMAIN</scope>
    <scope>MUTAGENESIS OF GLY-52; ARG-60; ARG-91; ARG-92; ILE-110; ARG-111; ARG-112; PHE-113; LEU-114 AND PRO-115</scope>
</reference>
<reference key="20">
    <citation type="journal article" date="2018" name="Mol. Microbiol.">
        <title>Induction of the Spx regulon by cell wall stress reveals novel regulatory mechanisms in Bacillus subtilis.</title>
        <authorList>
            <person name="Rojas-Tapias D.F."/>
            <person name="Helmann J.D."/>
        </authorList>
    </citation>
    <scope>FUNCTION IN CELL WALL STRESS</scope>
    <scope>ACTIVITY REGULATION</scope>
    <scope>INDUCTION</scope>
    <scope>DISRUPTION PHENOTYPE</scope>
</reference>
<reference key="21">
    <citation type="journal article" date="2018" name="PLoS Genet.">
        <title>Stabilization of Bacillus subtilis Spx under cell wall stress requires the anti-adaptor protein YirB.</title>
        <authorList>
            <person name="Rojas-Tapias D.F."/>
            <person name="Helmann J.D."/>
        </authorList>
    </citation>
    <scope>ACTIVITY REGULATION</scope>
</reference>
<reference key="22">
    <citation type="journal article" date="2019" name="J. Bacteriol.">
        <title>Inactivation of cysL inhibits biofilm formation by activating the disulfide stress regulator Spx in Bacillus subtilis.</title>
        <authorList>
            <person name="Kobayashi K."/>
        </authorList>
    </citation>
    <scope>FUNCTION</scope>
</reference>
<reference key="23">
    <citation type="journal article" date="2019" name="Curr. Genet.">
        <title>Spx, a versatile regulator of the Bacillus subtilis stress response.</title>
        <authorList>
            <person name="Schaefer H."/>
            <person name="Turgay K."/>
        </authorList>
    </citation>
    <scope>REVIEW</scope>
</reference>
<reference key="24">
    <citation type="journal article" date="2019" name="Adv. Microb. Physiol.">
        <title>Roles and regulation of Spx family transcription factors in Bacillus subtilis and related species.</title>
        <authorList>
            <person name="Rojas-Tapias D.F."/>
            <person name="Helmann J.D."/>
        </authorList>
    </citation>
    <scope>REVIEW</scope>
</reference>
<reference evidence="32" key="25">
    <citation type="journal article" date="2005" name="Proc. Natl. Acad. Sci. U.S.A.">
        <title>Crystal structure of the Bacillus subtilis anti-alpha, global transcriptional regulator, Spx, in complex with the alpha C-terminal domain of RNA polymerase.</title>
        <authorList>
            <person name="Newberry K.J."/>
            <person name="Nakano S."/>
            <person name="Zuber P."/>
            <person name="Brennan R.G."/>
        </authorList>
    </citation>
    <scope>X-RAY CRYSTALLOGRAPHY (1.50 ANGSTROMS) IN COMPLEX WITH THE C-TERMINAL DOMAIN OF THE RNAP ALPHA SUBUNIT</scope>
    <scope>DISULFIDE BONDS</scope>
</reference>
<reference evidence="33" key="26">
    <citation type="journal article" date="2009" name="J. Struct. Biol.">
        <title>Crystal structure of the in vivo-assembled Bacillus subtilis Spx/RNA polymerase alpha subunit C-terminal domain complex.</title>
        <authorList>
            <person name="Lamour V."/>
            <person name="Westblade L.F."/>
            <person name="Campbell E.A."/>
            <person name="Darst S.A."/>
        </authorList>
    </citation>
    <scope>X-RAY CRYSTALLOGRAPHY (2.30 ANGSTROMS) IN COMPLEX WITH THE C-TERMINAL DOMAIN OF THE RNAP ALPHA SUBUNIT</scope>
    <scope>DISULFIDE BONDS</scope>
    <source>
        <strain>168</strain>
    </source>
</reference>
<reference evidence="34" key="27">
    <citation type="journal article" date="2010" name="PLoS ONE">
        <title>Promoter recognition by a complex of Spx and the C-terminal domain of the RNA polymerase alpha subunit.</title>
        <authorList>
            <person name="Nakano M.M."/>
            <person name="Lin A."/>
            <person name="Zuber C.S."/>
            <person name="Newberry K.J."/>
            <person name="Brennan R.G."/>
            <person name="Zuber P."/>
        </authorList>
    </citation>
    <scope>X-RAY CRYSTALLOGRAPHY (1.90 ANGSTROMS) OF REDUCED SER-10 MUTANT IN COMPLEX WITH THE C-TERMINAL DOMAIN OF THE RNAP ALPHA SUBUNIT</scope>
    <scope>FUNCTION</scope>
    <scope>DOMAIN</scope>
    <scope>MUTAGENESIS OF ARG-60; LYS-62 AND LYS-66</scope>
</reference>
<reference evidence="35 36" key="28">
    <citation type="journal article" date="2019" name="Structure">
        <title>Structural basis for YjbH adaptor-mediated recognition of transcription factor Spx.</title>
        <authorList>
            <person name="Awad W."/>
            <person name="Al-Eryani Y."/>
            <person name="Ekstrom S."/>
            <person name="Logan D.T."/>
            <person name="von Wachenfeldt C."/>
        </authorList>
    </citation>
    <scope>X-RAY CRYSTALLOGRAPHY (1.79 ANGSTROMS) IN COMPLEXES WITH G.KAUSTOPHILUS SPXH/YJBH</scope>
    <scope>ACTIVITY REGULATION</scope>
    <scope>INTERACTION WITH SPXH/YJBH</scope>
    <scope>DISULFIDE BONDS</scope>
</reference>
<sequence>MVTLYTSPSCTSCRKARAWLEEHEIPFVERNIFSEPLSIDEIKQILRMTEDGTDEIISTRSKVFQKLNVNVESMPLQDLYRLINEHPGLLRRPIIIDEKRLQVGYNEDEIRRFLPRKVRSFQLREAQRLAN</sequence>
<accession>O31602</accession>
<proteinExistence type="evidence at protein level"/>
<organism>
    <name type="scientific">Bacillus subtilis (strain 168)</name>
    <dbReference type="NCBI Taxonomy" id="224308"/>
    <lineage>
        <taxon>Bacteria</taxon>
        <taxon>Bacillati</taxon>
        <taxon>Bacillota</taxon>
        <taxon>Bacilli</taxon>
        <taxon>Bacillales</taxon>
        <taxon>Bacillaceae</taxon>
        <taxon>Bacillus</taxon>
    </lineage>
</organism>
<dbReference type="EMBL" id="AL009126">
    <property type="protein sequence ID" value="CAB13007.1"/>
    <property type="molecule type" value="Genomic_DNA"/>
</dbReference>
<dbReference type="PIR" id="D69843">
    <property type="entry name" value="D69843"/>
</dbReference>
<dbReference type="RefSeq" id="NP_389032.1">
    <property type="nucleotide sequence ID" value="NC_000964.3"/>
</dbReference>
<dbReference type="RefSeq" id="WP_003245483.1">
    <property type="nucleotide sequence ID" value="NZ_OZ025638.1"/>
</dbReference>
<dbReference type="PDB" id="1Z3E">
    <property type="method" value="X-ray"/>
    <property type="resolution" value="1.50 A"/>
    <property type="chains" value="A=1-131"/>
</dbReference>
<dbReference type="PDB" id="3GFK">
    <property type="method" value="X-ray"/>
    <property type="resolution" value="2.30 A"/>
    <property type="chains" value="A=1-131"/>
</dbReference>
<dbReference type="PDB" id="3IHQ">
    <property type="method" value="X-ray"/>
    <property type="resolution" value="1.90 A"/>
    <property type="chains" value="A=1-131"/>
</dbReference>
<dbReference type="PDB" id="6GHB">
    <property type="method" value="X-ray"/>
    <property type="resolution" value="3.10 A"/>
    <property type="chains" value="A/C=1-131"/>
</dbReference>
<dbReference type="PDB" id="6GHO">
    <property type="method" value="X-ray"/>
    <property type="resolution" value="1.79 A"/>
    <property type="chains" value="A=1-131"/>
</dbReference>
<dbReference type="PDB" id="7F75">
    <property type="method" value="EM"/>
    <property type="resolution" value="4.20 A"/>
    <property type="chains" value="G=1-131"/>
</dbReference>
<dbReference type="PDBsum" id="1Z3E"/>
<dbReference type="PDBsum" id="3GFK"/>
<dbReference type="PDBsum" id="3IHQ"/>
<dbReference type="PDBsum" id="6GHB"/>
<dbReference type="PDBsum" id="6GHO"/>
<dbReference type="PDBsum" id="7F75"/>
<dbReference type="EMDB" id="EMD-31485"/>
<dbReference type="SMR" id="O31602"/>
<dbReference type="FunCoup" id="O31602">
    <property type="interactions" value="44"/>
</dbReference>
<dbReference type="IntAct" id="O31602">
    <property type="interactions" value="3"/>
</dbReference>
<dbReference type="STRING" id="224308.BSU11500"/>
<dbReference type="PaxDb" id="224308-BSU11500"/>
<dbReference type="EnsemblBacteria" id="CAB13007">
    <property type="protein sequence ID" value="CAB13007"/>
    <property type="gene ID" value="BSU_11500"/>
</dbReference>
<dbReference type="GeneID" id="86874373"/>
<dbReference type="GeneID" id="936407"/>
<dbReference type="KEGG" id="bsu:BSU11500"/>
<dbReference type="PATRIC" id="fig|224308.179.peg.1237"/>
<dbReference type="eggNOG" id="COG1393">
    <property type="taxonomic scope" value="Bacteria"/>
</dbReference>
<dbReference type="InParanoid" id="O31602"/>
<dbReference type="OrthoDB" id="9794155at2"/>
<dbReference type="PhylomeDB" id="O31602"/>
<dbReference type="BioCyc" id="BSUB:BSU11500-MONOMER"/>
<dbReference type="EvolutionaryTrace" id="O31602"/>
<dbReference type="Proteomes" id="UP000001570">
    <property type="component" value="Chromosome"/>
</dbReference>
<dbReference type="GO" id="GO:0005737">
    <property type="term" value="C:cytoplasm"/>
    <property type="evidence" value="ECO:0007669"/>
    <property type="project" value="UniProtKB-SubCell"/>
</dbReference>
<dbReference type="GO" id="GO:0045892">
    <property type="term" value="P:negative regulation of DNA-templated transcription"/>
    <property type="evidence" value="ECO:0007669"/>
    <property type="project" value="InterPro"/>
</dbReference>
<dbReference type="CDD" id="cd03032">
    <property type="entry name" value="ArsC_Spx"/>
    <property type="match status" value="1"/>
</dbReference>
<dbReference type="Gene3D" id="3.40.30.10">
    <property type="entry name" value="Glutaredoxin"/>
    <property type="match status" value="1"/>
</dbReference>
<dbReference type="HAMAP" id="MF_01132">
    <property type="entry name" value="Spx"/>
    <property type="match status" value="1"/>
</dbReference>
<dbReference type="InterPro" id="IPR006660">
    <property type="entry name" value="Arsenate_reductase-like"/>
</dbReference>
<dbReference type="InterPro" id="IPR023731">
    <property type="entry name" value="Spx"/>
</dbReference>
<dbReference type="InterPro" id="IPR036249">
    <property type="entry name" value="Thioredoxin-like_sf"/>
</dbReference>
<dbReference type="InterPro" id="IPR006504">
    <property type="entry name" value="Tscrpt_reg_Spx/MgsR"/>
</dbReference>
<dbReference type="NCBIfam" id="TIGR01617">
    <property type="entry name" value="arsC_related"/>
    <property type="match status" value="1"/>
</dbReference>
<dbReference type="NCBIfam" id="NF002459">
    <property type="entry name" value="PRK01655.1"/>
    <property type="match status" value="1"/>
</dbReference>
<dbReference type="NCBIfam" id="NF009210">
    <property type="entry name" value="PRK12559.1"/>
    <property type="match status" value="1"/>
</dbReference>
<dbReference type="PANTHER" id="PTHR30041">
    <property type="entry name" value="ARSENATE REDUCTASE"/>
    <property type="match status" value="1"/>
</dbReference>
<dbReference type="PANTHER" id="PTHR30041:SF7">
    <property type="entry name" value="GLOBAL TRANSCRIPTIONAL REGULATOR SPX"/>
    <property type="match status" value="1"/>
</dbReference>
<dbReference type="Pfam" id="PF03960">
    <property type="entry name" value="ArsC"/>
    <property type="match status" value="1"/>
</dbReference>
<dbReference type="SUPFAM" id="SSF52833">
    <property type="entry name" value="Thioredoxin-like"/>
    <property type="match status" value="1"/>
</dbReference>
<dbReference type="PROSITE" id="PS51353">
    <property type="entry name" value="ARSC"/>
    <property type="match status" value="1"/>
</dbReference>
<comment type="function">
    <text evidence="7 9 11 15 16 19 24">Global transcriptional regulator that plays a key role in stress response and exerts either positive or negative regulation of genes (PubMed:12642660, PubMed:15659166, PubMed:16885442, PubMed:18662407, PubMed:18687074, PubMed:29271514). Acts by interacting with the C-terminal domain of the alpha subunit of the RNA polymerase (RNAP) (PubMed:12642660, PubMed:15659166, PubMed:18687074, PubMed:20084284). This interaction can enhance binding of RNAP to the promoter region of target genes and stimulate their transcription, or block interaction of RNAP with activator proteins and repress transcription (PubMed:12642660, PubMed:15659166, PubMed:18687074, PubMed:20084284). Exhibits no DNA-binding activity (PubMed:15659166, PubMed:18687074).</text>
</comment>
<comment type="function">
    <text evidence="4 5 7 8 9 11 15 16 21 22 24 26">Induces the expression of a large number of genes in response to a variety of stress conditions, such as disulfide, heat and cell wall stress, while concurrently repressing transcription of genes involved in various developmental and growth-related pathways during periods of extreme stress (PubMed:12642660, PubMed:14597697). Functions in the oxidative stress response via induction of the transcription of thioredoxin (trxA) and thioredoxin reductase (trxB) during thiol-specific oxidative (disulfide) stress (PubMed:14597697, PubMed:15659166, PubMed:18687074). Mediates response to oxidative stress caused by paraquat (PQ) via induction of the methionine sulfoxide reductase genes, msrA and msrB (PubMed:18662407). Also acts as a transcriptional activator of the bacillithiol (BSH) biosynthesis genes in response to oxidizing conditions and thio-reactive compounds (PubMed:23894131). Involved in heat stress response and thermotolerance development, which results in diminished cellular protein aggregates (PubMed:24417481). Plays an important adaptive role in the cell wall stress response (PubMed:29271514). Participates in sulfate-dependent control of organosulfur metabolism. Negatively controls, via CymR, the expression of the organosulfur utilization operons ytmI, yxeI and ssu, and directly activates yrrT operon expression during growth in medium containing methionine as sole sulfur source (PubMed:16885442). Negatively affects competence and sporulation (PubMed:11703662, PubMed:12028382). Inhibits biofilm formation in response to disulfide stress by repressing biofilm matrix genes (PubMed:30718304).</text>
</comment>
<comment type="activity regulation">
    <text evidence="6 7 9 14 15 17 21 24 25 27">Under non-stress conditions, Spx is degraded by ClpXP and, to a lesser extent, by ClpCP (PubMed:12057962, PubMed:12642660, PubMed:19074380). Efficient dedradation by ClpXP requires the adapter protein SpxH/YjbH (PubMed:17908206, PubMed:19074380). Binding to SpxH/YjbH reduces the overall conformational flexibility of Spx and stabilizes the C-terminal ClpX recognition region of Spx (PubMed:30982633). In addition, activity is modulated by the formation of a disulfide bound within the N-terminal Cys-X-X-Cys (CXXC) motif, which is required for the transcriptional activation of trxA and trxB, or for the activation of msrAB operon expression following paraquat oxidative stress (PubMed:15659166, PubMed:18662407). However, it seems that formation of the disulfide bound is not essential for induction of all Spx-controlled genes, as for example the case of BSH biosynthesis genes (PubMed:23894131). Similarly, induction of the Spx regulon during cell wall stress is not accompanied by oxidation of the disulfide switch, but requires Spx stabilization by the anti-adapter protein SpxO/YirB (PubMed:29271514, PubMed:30001325).</text>
</comment>
<comment type="subunit">
    <text evidence="7 10 17 18 19 20 23 27">Interacts with the C-terminal domain of the alpha subunit of the RNAP (PubMed:12642660, PubMed:16249335, PubMed:19580872, PubMed:20084284, PubMed:22307755). A single Spx monomer interacts with RNAP to form the transcription activation complex (PubMed:22307755). Interacts with the adapter protein SpxH/YjbH (PubMed:19074380, PubMed:24942655, PubMed:30982633).</text>
</comment>
<comment type="interaction">
    <interactant intactId="EBI-5248631">
        <id>O31602</id>
    </interactant>
    <interactant intactId="EBI-5244361">
        <id>P37871</id>
        <label>rpoC</label>
    </interactant>
    <organismsDiffer>false</organismsDiffer>
    <experiments>2</experiments>
</comment>
<comment type="interaction">
    <interactant intactId="EBI-5248631">
        <id>O31602</id>
    </interactant>
    <interactant intactId="EBI-6406036">
        <id>O31606</id>
        <label>spxH</label>
    </interactant>
    <organismsDiffer>false</organismsDiffer>
    <experiments>3</experiments>
</comment>
<comment type="subcellular location">
    <subcellularLocation>
        <location evidence="30">Cytoplasm</location>
    </subcellularLocation>
</comment>
<comment type="induction">
    <text evidence="3 8 12 13 22 24">Transcribed from at least five promoters located in the yjbC regulatory region or in the yjbC-spx intergenic region (PubMed:17158660, PubMed:29271514). Induced by heat, salt, ethanol and disulfide stress and also by phosphate limitation (PubMed:11544224, PubMed:14597697, PubMed:24417481). Induced by cell wall stress but not by membrane stress (PubMed:29271514). Transcribed under partial control of SigM ECF sigma factor (PubMed:17434969, PubMed:29271514). Repressed by YodB and PerR. YodB protects a region that includes the P3 -10 and -35 regions, while PerR binds to a region downstream of the P3 transcriptional start site (PubMed:17158660).</text>
</comment>
<comment type="domain">
    <text evidence="19 23">The C-terminal region is essential for structural folding and for interaction with SpxH/YjbH (PubMed:24942655). A conformational change during oxidation of Spx to the disulfide form likely alters the structure of Spx alpha helix alpha4, which contains residues that function in transcriptional activation and Spx/RNAP-promoter interaction (PubMed:20084284).</text>
</comment>
<comment type="disruption phenotype">
    <text evidence="4 8 15 22 24">Inactivation of the gene results in ClpP-independent competence development as well as partial suppression of the sporulation defect conferred by clpP mutation (PubMed:11703662). Null mutant shows hypersensitivity to disulfide stress and to paraquat (PubMed:14597697, PubMed:18662407). Mutants have increased sensitivity toward cell wall active antibiotics inhibiting both early and late steps in peptidoglycan synthesis (PubMed:29271514). Cells lacking the gene are defective in thermotolerance (PubMed:24417481).</text>
</comment>
<comment type="similarity">
    <text evidence="1 30">Belongs to the ArsC family. Spx subfamily.</text>
</comment>
<name>SPX_BACSU</name>
<protein>
    <recommendedName>
        <fullName evidence="1 29">Global transcriptional regulator Spx</fullName>
    </recommendedName>
    <alternativeName>
        <fullName>Redox-responsive transcription factor Spx</fullName>
    </alternativeName>
    <alternativeName>
        <fullName evidence="28">Suppressor of clpP and clpX</fullName>
        <shortName evidence="28">Spx</shortName>
    </alternativeName>
</protein>
<gene>
    <name evidence="28" type="primary">spx</name>
    <name evidence="31" type="synonym">spxA</name>
    <name type="synonym">yjbD</name>
    <name type="ordered locus">BSU11500</name>
</gene>
<keyword id="KW-0002">3D-structure</keyword>
<keyword id="KW-0963">Cytoplasm</keyword>
<keyword id="KW-1015">Disulfide bond</keyword>
<keyword id="KW-0676">Redox-active center</keyword>
<keyword id="KW-1185">Reference proteome</keyword>
<keyword id="KW-0346">Stress response</keyword>
<keyword id="KW-0804">Transcription</keyword>
<keyword id="KW-0805">Transcription regulation</keyword>
<feature type="chain" id="PRO_0000162551" description="Global transcriptional regulator Spx">
    <location>
        <begin position="1"/>
        <end position="131"/>
    </location>
</feature>
<feature type="short sequence motif" description="CXXC" evidence="30">
    <location>
        <begin position="10"/>
        <end position="13"/>
    </location>
</feature>
<feature type="disulfide bond" description="Redox-active" evidence="2 9 10 18 27 32 33 35 36">
    <location>
        <begin position="10"/>
        <end position="13"/>
    </location>
</feature>
<feature type="mutagenesis site" description="Cannot induce expression of trxA and trxB. Does not affect stability." evidence="9">
    <original>C</original>
    <variation>A</variation>
    <location>
        <position position="10"/>
    </location>
</feature>
<feature type="mutagenesis site" description="Cannot induce expression of trxA and trxB. Does not affect stability." evidence="9">
    <original>C</original>
    <variation>A</variation>
    <location>
        <position position="13"/>
    </location>
</feature>
<feature type="mutagenesis site" description="Does not affect binding to SpxH/YjbH." evidence="23">
    <original>G</original>
    <variation>R</variation>
    <location>
        <position position="52"/>
    </location>
</feature>
<feature type="mutagenesis site" description="Confers defects in Spx-activated transcription but not in Spx-dependent repression. Does not affect binding to SpxH/YjbH." evidence="19 23">
    <original>R</original>
    <variation>E</variation>
    <location>
        <position position="60"/>
    </location>
</feature>
<feature type="mutagenesis site" description="Confers defects in Spx-activated transcription but not in Spx-dependent repression." evidence="19">
    <original>K</original>
    <variation>E</variation>
    <location>
        <position position="62"/>
    </location>
</feature>
<feature type="mutagenesis site" description="Does not affect trxB expression." evidence="19">
    <original>K</original>
    <variation>E</variation>
    <location>
        <position position="66"/>
    </location>
</feature>
<feature type="mutagenesis site" description="Does not affect binding to SpxH/YjbH." evidence="23">
    <original>R</original>
    <variation>A</variation>
    <location>
        <position position="91"/>
    </location>
</feature>
<feature type="mutagenesis site" description="Does not affect binding to SpxH/YjbH." evidence="23">
    <original>R</original>
    <variation>A</variation>
    <location>
        <position position="92"/>
    </location>
</feature>
<feature type="mutagenesis site" description="Decreases activity. 90% decrease in binding to SpxH/YjbH." evidence="23">
    <original>I</original>
    <variation>A</variation>
    <location>
        <position position="110"/>
    </location>
</feature>
<feature type="mutagenesis site" description="Decreases activity." evidence="23">
    <original>R</original>
    <variation>A</variation>
    <location>
        <position position="111"/>
    </location>
</feature>
<feature type="mutagenesis site" description="80% decrease in binding to SpxH/YjbH." evidence="23">
    <original>R</original>
    <variation>A</variation>
    <location>
        <position position="112"/>
    </location>
</feature>
<feature type="mutagenesis site" description="Decreases activity. 80% decrease in binding to SpxH/YjbH. Enhanced proteolysis by ClpXP in the absence of SpxH/YjbH." evidence="23">
    <original>F</original>
    <variation>A</variation>
    <location>
        <position position="113"/>
    </location>
</feature>
<feature type="mutagenesis site" description="Decreases activity. 50% decrease in binding to SpxH/YjbH. Enhanced proteolysis by ClpXP in the absence of SpxH/YjbH." evidence="23">
    <original>L</original>
    <variation>A</variation>
    <location>
        <position position="114"/>
    </location>
</feature>
<feature type="mutagenesis site" description="Decreases activity. 90% decrease in binding to SpxH/YjbH." evidence="23">
    <original>P</original>
    <variation>A</variation>
    <location>
        <position position="115"/>
    </location>
</feature>
<feature type="mutagenesis site" description="Retains activity. Resistant to degradation by ClpXP." evidence="8">
    <original>AN</original>
    <variation>DD</variation>
    <location>
        <begin position="130"/>
        <end position="131"/>
    </location>
</feature>
<feature type="strand" evidence="37">
    <location>
        <begin position="2"/>
        <end position="6"/>
    </location>
</feature>
<feature type="helix" evidence="37">
    <location>
        <begin position="11"/>
        <end position="22"/>
    </location>
</feature>
<feature type="strand" evidence="37">
    <location>
        <begin position="27"/>
        <end position="31"/>
    </location>
</feature>
<feature type="turn" evidence="37">
    <location>
        <begin position="32"/>
        <end position="34"/>
    </location>
</feature>
<feature type="helix" evidence="37">
    <location>
        <begin position="39"/>
        <end position="47"/>
    </location>
</feature>
<feature type="helix" evidence="37">
    <location>
        <begin position="53"/>
        <end position="55"/>
    </location>
</feature>
<feature type="helix" evidence="37">
    <location>
        <begin position="62"/>
        <end position="67"/>
    </location>
</feature>
<feature type="helix" evidence="37">
    <location>
        <begin position="71"/>
        <end position="73"/>
    </location>
</feature>
<feature type="helix" evidence="37">
    <location>
        <begin position="76"/>
        <end position="85"/>
    </location>
</feature>
<feature type="helix" evidence="37">
    <location>
        <begin position="87"/>
        <end position="89"/>
    </location>
</feature>
<feature type="strand" evidence="37">
    <location>
        <begin position="94"/>
        <end position="96"/>
    </location>
</feature>
<feature type="strand" evidence="37">
    <location>
        <begin position="101"/>
        <end position="104"/>
    </location>
</feature>
<feature type="helix" evidence="37">
    <location>
        <begin position="109"/>
        <end position="113"/>
    </location>
</feature>
<feature type="strand" evidence="39">
    <location>
        <begin position="118"/>
        <end position="120"/>
    </location>
</feature>
<feature type="turn" evidence="38">
    <location>
        <begin position="121"/>
        <end position="123"/>
    </location>
</feature>
<evidence type="ECO:0000255" key="1">
    <source>
        <dbReference type="HAMAP-Rule" id="MF_01132"/>
    </source>
</evidence>
<evidence type="ECO:0000255" key="2">
    <source>
        <dbReference type="PROSITE-ProRule" id="PRU01282"/>
    </source>
</evidence>
<evidence type="ECO:0000269" key="3">
    <source>
    </source>
</evidence>
<evidence type="ECO:0000269" key="4">
    <source>
    </source>
</evidence>
<evidence type="ECO:0000269" key="5">
    <source>
    </source>
</evidence>
<evidence type="ECO:0000269" key="6">
    <source>
    </source>
</evidence>
<evidence type="ECO:0000269" key="7">
    <source>
    </source>
</evidence>
<evidence type="ECO:0000269" key="8">
    <source>
    </source>
</evidence>
<evidence type="ECO:0000269" key="9">
    <source>
    </source>
</evidence>
<evidence type="ECO:0000269" key="10">
    <source>
    </source>
</evidence>
<evidence type="ECO:0000269" key="11">
    <source>
    </source>
</evidence>
<evidence type="ECO:0000269" key="12">
    <source>
    </source>
</evidence>
<evidence type="ECO:0000269" key="13">
    <source>
    </source>
</evidence>
<evidence type="ECO:0000269" key="14">
    <source>
    </source>
</evidence>
<evidence type="ECO:0000269" key="15">
    <source>
    </source>
</evidence>
<evidence type="ECO:0000269" key="16">
    <source>
    </source>
</evidence>
<evidence type="ECO:0000269" key="17">
    <source>
    </source>
</evidence>
<evidence type="ECO:0000269" key="18">
    <source>
    </source>
</evidence>
<evidence type="ECO:0000269" key="19">
    <source>
    </source>
</evidence>
<evidence type="ECO:0000269" key="20">
    <source>
    </source>
</evidence>
<evidence type="ECO:0000269" key="21">
    <source>
    </source>
</evidence>
<evidence type="ECO:0000269" key="22">
    <source>
    </source>
</evidence>
<evidence type="ECO:0000269" key="23">
    <source>
    </source>
</evidence>
<evidence type="ECO:0000269" key="24">
    <source>
    </source>
</evidence>
<evidence type="ECO:0000269" key="25">
    <source>
    </source>
</evidence>
<evidence type="ECO:0000269" key="26">
    <source>
    </source>
</evidence>
<evidence type="ECO:0000269" key="27">
    <source>
    </source>
</evidence>
<evidence type="ECO:0000303" key="28">
    <source>
    </source>
</evidence>
<evidence type="ECO:0000303" key="29">
    <source>
    </source>
</evidence>
<evidence type="ECO:0000305" key="30"/>
<evidence type="ECO:0000312" key="31">
    <source>
        <dbReference type="EMBL" id="CAB13007.1"/>
    </source>
</evidence>
<evidence type="ECO:0007744" key="32">
    <source>
        <dbReference type="PDB" id="1Z3E"/>
    </source>
</evidence>
<evidence type="ECO:0007744" key="33">
    <source>
        <dbReference type="PDB" id="3GFK"/>
    </source>
</evidence>
<evidence type="ECO:0007744" key="34">
    <source>
        <dbReference type="PDB" id="3IHQ"/>
    </source>
</evidence>
<evidence type="ECO:0007744" key="35">
    <source>
        <dbReference type="PDB" id="6GHB"/>
    </source>
</evidence>
<evidence type="ECO:0007744" key="36">
    <source>
        <dbReference type="PDB" id="6GHO"/>
    </source>
</evidence>
<evidence type="ECO:0007829" key="37">
    <source>
        <dbReference type="PDB" id="1Z3E"/>
    </source>
</evidence>
<evidence type="ECO:0007829" key="38">
    <source>
        <dbReference type="PDB" id="6GHB"/>
    </source>
</evidence>
<evidence type="ECO:0007829" key="39">
    <source>
        <dbReference type="PDB" id="6GHO"/>
    </source>
</evidence>